<comment type="function">
    <text evidence="1">Catalyzes the reversible isomerization of glucose-6-phosphate to fructose-6-phosphate.</text>
</comment>
<comment type="catalytic activity">
    <reaction evidence="1">
        <text>alpha-D-glucose 6-phosphate = beta-D-fructose 6-phosphate</text>
        <dbReference type="Rhea" id="RHEA:11816"/>
        <dbReference type="ChEBI" id="CHEBI:57634"/>
        <dbReference type="ChEBI" id="CHEBI:58225"/>
        <dbReference type="EC" id="5.3.1.9"/>
    </reaction>
</comment>
<comment type="pathway">
    <text evidence="1">Carbohydrate biosynthesis; gluconeogenesis.</text>
</comment>
<comment type="pathway">
    <text evidence="1">Carbohydrate degradation; glycolysis; D-glyceraldehyde 3-phosphate and glycerone phosphate from D-glucose: step 2/4.</text>
</comment>
<comment type="subcellular location">
    <subcellularLocation>
        <location evidence="1">Cytoplasm</location>
    </subcellularLocation>
</comment>
<comment type="similarity">
    <text evidence="1">Belongs to the GPI family.</text>
</comment>
<gene>
    <name evidence="1" type="primary">pgi</name>
    <name type="ordered locus">SAV0962</name>
</gene>
<reference key="1">
    <citation type="journal article" date="2001" name="Lancet">
        <title>Whole genome sequencing of meticillin-resistant Staphylococcus aureus.</title>
        <authorList>
            <person name="Kuroda M."/>
            <person name="Ohta T."/>
            <person name="Uchiyama I."/>
            <person name="Baba T."/>
            <person name="Yuzawa H."/>
            <person name="Kobayashi I."/>
            <person name="Cui L."/>
            <person name="Oguchi A."/>
            <person name="Aoki K."/>
            <person name="Nagai Y."/>
            <person name="Lian J.-Q."/>
            <person name="Ito T."/>
            <person name="Kanamori M."/>
            <person name="Matsumaru H."/>
            <person name="Maruyama A."/>
            <person name="Murakami H."/>
            <person name="Hosoyama A."/>
            <person name="Mizutani-Ui Y."/>
            <person name="Takahashi N.K."/>
            <person name="Sawano T."/>
            <person name="Inoue R."/>
            <person name="Kaito C."/>
            <person name="Sekimizu K."/>
            <person name="Hirakawa H."/>
            <person name="Kuhara S."/>
            <person name="Goto S."/>
            <person name="Yabuzaki J."/>
            <person name="Kanehisa M."/>
            <person name="Yamashita A."/>
            <person name="Oshima K."/>
            <person name="Furuya K."/>
            <person name="Yoshino C."/>
            <person name="Shiba T."/>
            <person name="Hattori M."/>
            <person name="Ogasawara N."/>
            <person name="Hayashi H."/>
            <person name="Hiramatsu K."/>
        </authorList>
    </citation>
    <scope>NUCLEOTIDE SEQUENCE [LARGE SCALE GENOMIC DNA]</scope>
    <source>
        <strain>Mu50 / ATCC 700699</strain>
    </source>
</reference>
<dbReference type="EC" id="5.3.1.9" evidence="1"/>
<dbReference type="EMBL" id="BA000017">
    <property type="protein sequence ID" value="BAB57124.1"/>
    <property type="molecule type" value="Genomic_DNA"/>
</dbReference>
<dbReference type="RefSeq" id="WP_000148852.1">
    <property type="nucleotide sequence ID" value="NC_002758.2"/>
</dbReference>
<dbReference type="SMR" id="P64194"/>
<dbReference type="KEGG" id="sav:SAV0962"/>
<dbReference type="HOGENOM" id="CLU_037303_0_1_9"/>
<dbReference type="PhylomeDB" id="P64194"/>
<dbReference type="UniPathway" id="UPA00109">
    <property type="reaction ID" value="UER00181"/>
</dbReference>
<dbReference type="UniPathway" id="UPA00138"/>
<dbReference type="Proteomes" id="UP000002481">
    <property type="component" value="Chromosome"/>
</dbReference>
<dbReference type="GO" id="GO:0005829">
    <property type="term" value="C:cytosol"/>
    <property type="evidence" value="ECO:0007669"/>
    <property type="project" value="TreeGrafter"/>
</dbReference>
<dbReference type="GO" id="GO:0097367">
    <property type="term" value="F:carbohydrate derivative binding"/>
    <property type="evidence" value="ECO:0007669"/>
    <property type="project" value="InterPro"/>
</dbReference>
<dbReference type="GO" id="GO:0004347">
    <property type="term" value="F:glucose-6-phosphate isomerase activity"/>
    <property type="evidence" value="ECO:0007669"/>
    <property type="project" value="UniProtKB-UniRule"/>
</dbReference>
<dbReference type="GO" id="GO:0048029">
    <property type="term" value="F:monosaccharide binding"/>
    <property type="evidence" value="ECO:0007669"/>
    <property type="project" value="TreeGrafter"/>
</dbReference>
<dbReference type="GO" id="GO:0006094">
    <property type="term" value="P:gluconeogenesis"/>
    <property type="evidence" value="ECO:0007669"/>
    <property type="project" value="UniProtKB-UniRule"/>
</dbReference>
<dbReference type="GO" id="GO:0051156">
    <property type="term" value="P:glucose 6-phosphate metabolic process"/>
    <property type="evidence" value="ECO:0007669"/>
    <property type="project" value="TreeGrafter"/>
</dbReference>
<dbReference type="GO" id="GO:0006096">
    <property type="term" value="P:glycolytic process"/>
    <property type="evidence" value="ECO:0007669"/>
    <property type="project" value="UniProtKB-UniRule"/>
</dbReference>
<dbReference type="CDD" id="cd05015">
    <property type="entry name" value="SIS_PGI_1"/>
    <property type="match status" value="1"/>
</dbReference>
<dbReference type="CDD" id="cd05016">
    <property type="entry name" value="SIS_PGI_2"/>
    <property type="match status" value="1"/>
</dbReference>
<dbReference type="FunFam" id="3.40.50.10490:FF:000015">
    <property type="entry name" value="Glucose-6-phosphate isomerase"/>
    <property type="match status" value="1"/>
</dbReference>
<dbReference type="FunFam" id="3.40.50.10490:FF:000016">
    <property type="entry name" value="Glucose-6-phosphate isomerase"/>
    <property type="match status" value="1"/>
</dbReference>
<dbReference type="Gene3D" id="3.40.50.10490">
    <property type="entry name" value="Glucose-6-phosphate isomerase like protein, domain 1"/>
    <property type="match status" value="3"/>
</dbReference>
<dbReference type="HAMAP" id="MF_00473">
    <property type="entry name" value="G6P_isomerase"/>
    <property type="match status" value="1"/>
</dbReference>
<dbReference type="InterPro" id="IPR001672">
    <property type="entry name" value="G6P_Isomerase"/>
</dbReference>
<dbReference type="InterPro" id="IPR018189">
    <property type="entry name" value="Phosphoglucose_isomerase_CS"/>
</dbReference>
<dbReference type="InterPro" id="IPR046348">
    <property type="entry name" value="SIS_dom_sf"/>
</dbReference>
<dbReference type="InterPro" id="IPR035476">
    <property type="entry name" value="SIS_PGI_1"/>
</dbReference>
<dbReference type="InterPro" id="IPR035482">
    <property type="entry name" value="SIS_PGI_2"/>
</dbReference>
<dbReference type="NCBIfam" id="NF010697">
    <property type="entry name" value="PRK14097.1"/>
    <property type="match status" value="1"/>
</dbReference>
<dbReference type="PANTHER" id="PTHR11469">
    <property type="entry name" value="GLUCOSE-6-PHOSPHATE ISOMERASE"/>
    <property type="match status" value="1"/>
</dbReference>
<dbReference type="PANTHER" id="PTHR11469:SF1">
    <property type="entry name" value="GLUCOSE-6-PHOSPHATE ISOMERASE"/>
    <property type="match status" value="1"/>
</dbReference>
<dbReference type="Pfam" id="PF00342">
    <property type="entry name" value="PGI"/>
    <property type="match status" value="1"/>
</dbReference>
<dbReference type="PRINTS" id="PR00662">
    <property type="entry name" value="G6PISOMERASE"/>
</dbReference>
<dbReference type="SUPFAM" id="SSF53697">
    <property type="entry name" value="SIS domain"/>
    <property type="match status" value="1"/>
</dbReference>
<dbReference type="PROSITE" id="PS00765">
    <property type="entry name" value="P_GLUCOSE_ISOMERASE_1"/>
    <property type="match status" value="1"/>
</dbReference>
<dbReference type="PROSITE" id="PS00174">
    <property type="entry name" value="P_GLUCOSE_ISOMERASE_2"/>
    <property type="match status" value="1"/>
</dbReference>
<dbReference type="PROSITE" id="PS51463">
    <property type="entry name" value="P_GLUCOSE_ISOMERASE_3"/>
    <property type="match status" value="1"/>
</dbReference>
<organism>
    <name type="scientific">Staphylococcus aureus (strain Mu50 / ATCC 700699)</name>
    <dbReference type="NCBI Taxonomy" id="158878"/>
    <lineage>
        <taxon>Bacteria</taxon>
        <taxon>Bacillati</taxon>
        <taxon>Bacillota</taxon>
        <taxon>Bacilli</taxon>
        <taxon>Bacillales</taxon>
        <taxon>Staphylococcaceae</taxon>
        <taxon>Staphylococcus</taxon>
    </lineage>
</organism>
<name>G6PI_STAAM</name>
<evidence type="ECO:0000255" key="1">
    <source>
        <dbReference type="HAMAP-Rule" id="MF_00473"/>
    </source>
</evidence>
<keyword id="KW-0963">Cytoplasm</keyword>
<keyword id="KW-0312">Gluconeogenesis</keyword>
<keyword id="KW-0324">Glycolysis</keyword>
<keyword id="KW-0413">Isomerase</keyword>
<sequence>MTHIQLDFSKTLEFFGEHELKQQQEIVKSIHKTIHEGTGAGSDFLGWVDLPVDYDKEEFSRIVEASKRIKENSDVLVVIGIGGSYLGARAAIEMLTSSFRNSNEYPEIVFVGNHLSSTYTKELVDYLADKDFSVNVISKSGTTTEPAVAFRLFKQLVEERYGKEEAQKRIFATTDKEKGALKQLATNEGYETFIVPDDVGGRYSVLTAVGLLPIATAGINIEAMMIGAAKAREELSSDKLEDNIAYQYATIRNILYAKGYTTEMLINYEPSMQYFNEWWKQLFGESEGKDFKGIYPSSANYTTDLHSLGQYVQEGRRFLFETVVKVNHPKYDITIEKDSDDLDGLNYLAGKTIDEVNTKAFEGTLLAHTDGGVPNMVVNIPQLDEETFGYVVYFFELACAMSGYQLGVNPFNQPGVEAYKQNMFALLGKPGFEDLKKELEERL</sequence>
<accession>P64194</accession>
<accession>Q99VC6</accession>
<protein>
    <recommendedName>
        <fullName evidence="1">Glucose-6-phosphate isomerase</fullName>
        <shortName evidence="1">GPI</shortName>
        <ecNumber evidence="1">5.3.1.9</ecNumber>
    </recommendedName>
    <alternativeName>
        <fullName evidence="1">Phosphoglucose isomerase</fullName>
        <shortName evidence="1">PGI</shortName>
    </alternativeName>
    <alternativeName>
        <fullName evidence="1">Phosphohexose isomerase</fullName>
        <shortName evidence="1">PHI</shortName>
    </alternativeName>
</protein>
<feature type="chain" id="PRO_0000180729" description="Glucose-6-phosphate isomerase">
    <location>
        <begin position="1"/>
        <end position="443"/>
    </location>
</feature>
<feature type="active site" description="Proton donor" evidence="1">
    <location>
        <position position="285"/>
    </location>
</feature>
<feature type="active site" evidence="1">
    <location>
        <position position="306"/>
    </location>
</feature>
<feature type="active site" evidence="1">
    <location>
        <position position="420"/>
    </location>
</feature>
<proteinExistence type="inferred from homology"/>